<organism>
    <name type="scientific">Yersinia pestis</name>
    <dbReference type="NCBI Taxonomy" id="632"/>
    <lineage>
        <taxon>Bacteria</taxon>
        <taxon>Pseudomonadati</taxon>
        <taxon>Pseudomonadota</taxon>
        <taxon>Gammaproteobacteria</taxon>
        <taxon>Enterobacterales</taxon>
        <taxon>Yersiniaceae</taxon>
        <taxon>Yersinia</taxon>
    </lineage>
</organism>
<protein>
    <recommendedName>
        <fullName evidence="1">Small heat shock protein IbpB</fullName>
    </recommendedName>
    <alternativeName>
        <fullName evidence="1">16 kDa heat shock protein B</fullName>
    </alternativeName>
</protein>
<evidence type="ECO:0000255" key="1">
    <source>
        <dbReference type="HAMAP-Rule" id="MF_02001"/>
    </source>
</evidence>
<evidence type="ECO:0000255" key="2">
    <source>
        <dbReference type="PROSITE-ProRule" id="PRU00285"/>
    </source>
</evidence>
<evidence type="ECO:0000305" key="3"/>
<dbReference type="EMBL" id="AL590842">
    <property type="protein sequence ID" value="CAL22654.1"/>
    <property type="molecule type" value="Genomic_DNA"/>
</dbReference>
<dbReference type="EMBL" id="AE009952">
    <property type="protein sequence ID" value="AAM87644.1"/>
    <property type="status" value="ALT_INIT"/>
    <property type="molecule type" value="Genomic_DNA"/>
</dbReference>
<dbReference type="EMBL" id="AE017042">
    <property type="protein sequence ID" value="AAS64133.1"/>
    <property type="status" value="ALT_INIT"/>
    <property type="molecule type" value="Genomic_DNA"/>
</dbReference>
<dbReference type="PIR" id="AC0496">
    <property type="entry name" value="AC0496"/>
</dbReference>
<dbReference type="RefSeq" id="WP_002209635.1">
    <property type="nucleotide sequence ID" value="NZ_WUCM01000035.1"/>
</dbReference>
<dbReference type="RefSeq" id="YP_002348938.1">
    <property type="nucleotide sequence ID" value="NC_003143.1"/>
</dbReference>
<dbReference type="SMR" id="Q8Z9V6"/>
<dbReference type="STRING" id="214092.YPO4084"/>
<dbReference type="PaxDb" id="214092-YPO4084"/>
<dbReference type="EnsemblBacteria" id="AAS64133">
    <property type="protein sequence ID" value="AAS64133"/>
    <property type="gene ID" value="YP_3993"/>
</dbReference>
<dbReference type="GeneID" id="57974634"/>
<dbReference type="KEGG" id="ype:YPO4084"/>
<dbReference type="KEGG" id="ypk:y4101"/>
<dbReference type="KEGG" id="ypm:YP_3993"/>
<dbReference type="PATRIC" id="fig|214092.21.peg.4625"/>
<dbReference type="eggNOG" id="COG0071">
    <property type="taxonomic scope" value="Bacteria"/>
</dbReference>
<dbReference type="HOGENOM" id="CLU_046737_4_2_6"/>
<dbReference type="OMA" id="NIMVQND"/>
<dbReference type="OrthoDB" id="6871152at2"/>
<dbReference type="Proteomes" id="UP000000815">
    <property type="component" value="Chromosome"/>
</dbReference>
<dbReference type="Proteomes" id="UP000001019">
    <property type="component" value="Chromosome"/>
</dbReference>
<dbReference type="Proteomes" id="UP000002490">
    <property type="component" value="Chromosome"/>
</dbReference>
<dbReference type="GO" id="GO:0005737">
    <property type="term" value="C:cytoplasm"/>
    <property type="evidence" value="ECO:0000318"/>
    <property type="project" value="GO_Central"/>
</dbReference>
<dbReference type="GO" id="GO:0050821">
    <property type="term" value="P:protein stabilization"/>
    <property type="evidence" value="ECO:0007669"/>
    <property type="project" value="UniProtKB-UniRule"/>
</dbReference>
<dbReference type="CDD" id="cd06470">
    <property type="entry name" value="ACD_IbpA-B_like"/>
    <property type="match status" value="1"/>
</dbReference>
<dbReference type="Gene3D" id="2.60.40.790">
    <property type="match status" value="1"/>
</dbReference>
<dbReference type="HAMAP" id="MF_02001">
    <property type="entry name" value="HSP20_IbpB"/>
    <property type="match status" value="1"/>
</dbReference>
<dbReference type="InterPro" id="IPR002068">
    <property type="entry name" value="A-crystallin/Hsp20_dom"/>
</dbReference>
<dbReference type="InterPro" id="IPR037913">
    <property type="entry name" value="ACD_IbpA/B"/>
</dbReference>
<dbReference type="InterPro" id="IPR008978">
    <property type="entry name" value="HSP20-like_chaperone"/>
</dbReference>
<dbReference type="InterPro" id="IPR022848">
    <property type="entry name" value="HSP20_IbpB"/>
</dbReference>
<dbReference type="NCBIfam" id="NF008618">
    <property type="entry name" value="PRK11597.1"/>
    <property type="match status" value="1"/>
</dbReference>
<dbReference type="PANTHER" id="PTHR47062">
    <property type="match status" value="1"/>
</dbReference>
<dbReference type="PANTHER" id="PTHR47062:SF2">
    <property type="entry name" value="SMALL HEAT SHOCK PROTEIN IBPB"/>
    <property type="match status" value="1"/>
</dbReference>
<dbReference type="Pfam" id="PF00011">
    <property type="entry name" value="HSP20"/>
    <property type="match status" value="1"/>
</dbReference>
<dbReference type="SUPFAM" id="SSF49764">
    <property type="entry name" value="HSP20-like chaperones"/>
    <property type="match status" value="1"/>
</dbReference>
<dbReference type="PROSITE" id="PS01031">
    <property type="entry name" value="SHSP"/>
    <property type="match status" value="1"/>
</dbReference>
<sequence length="154" mass="17489">MRNYDLSPLLRQWIGFDKLASTMQGGQEPQGFPPYNIEKTDDNHYRISLALAGFKQSELDIEVEGPRLTVRGKPTPVEKQVEYLHQGLVRKEFSLTFTLAEHLNVDNAQFENGLLHIDLLRQVPEALQPQRIAIGSATPQERQVLESPEAPDQQ</sequence>
<name>IBPB_YERPE</name>
<keyword id="KW-0143">Chaperone</keyword>
<keyword id="KW-0963">Cytoplasm</keyword>
<keyword id="KW-1185">Reference proteome</keyword>
<keyword id="KW-0346">Stress response</keyword>
<reference key="1">
    <citation type="journal article" date="2001" name="Nature">
        <title>Genome sequence of Yersinia pestis, the causative agent of plague.</title>
        <authorList>
            <person name="Parkhill J."/>
            <person name="Wren B.W."/>
            <person name="Thomson N.R."/>
            <person name="Titball R.W."/>
            <person name="Holden M.T.G."/>
            <person name="Prentice M.B."/>
            <person name="Sebaihia M."/>
            <person name="James K.D."/>
            <person name="Churcher C.M."/>
            <person name="Mungall K.L."/>
            <person name="Baker S."/>
            <person name="Basham D."/>
            <person name="Bentley S.D."/>
            <person name="Brooks K."/>
            <person name="Cerdeno-Tarraga A.-M."/>
            <person name="Chillingworth T."/>
            <person name="Cronin A."/>
            <person name="Davies R.M."/>
            <person name="Davis P."/>
            <person name="Dougan G."/>
            <person name="Feltwell T."/>
            <person name="Hamlin N."/>
            <person name="Holroyd S."/>
            <person name="Jagels K."/>
            <person name="Karlyshev A.V."/>
            <person name="Leather S."/>
            <person name="Moule S."/>
            <person name="Oyston P.C.F."/>
            <person name="Quail M.A."/>
            <person name="Rutherford K.M."/>
            <person name="Simmonds M."/>
            <person name="Skelton J."/>
            <person name="Stevens K."/>
            <person name="Whitehead S."/>
            <person name="Barrell B.G."/>
        </authorList>
    </citation>
    <scope>NUCLEOTIDE SEQUENCE [LARGE SCALE GENOMIC DNA]</scope>
    <source>
        <strain>CO-92 / Biovar Orientalis</strain>
    </source>
</reference>
<reference key="2">
    <citation type="journal article" date="2002" name="J. Bacteriol.">
        <title>Genome sequence of Yersinia pestis KIM.</title>
        <authorList>
            <person name="Deng W."/>
            <person name="Burland V."/>
            <person name="Plunkett G. III"/>
            <person name="Boutin A."/>
            <person name="Mayhew G.F."/>
            <person name="Liss P."/>
            <person name="Perna N.T."/>
            <person name="Rose D.J."/>
            <person name="Mau B."/>
            <person name="Zhou S."/>
            <person name="Schwartz D.C."/>
            <person name="Fetherston J.D."/>
            <person name="Lindler L.E."/>
            <person name="Brubaker R.R."/>
            <person name="Plano G.V."/>
            <person name="Straley S.C."/>
            <person name="McDonough K.A."/>
            <person name="Nilles M.L."/>
            <person name="Matson J.S."/>
            <person name="Blattner F.R."/>
            <person name="Perry R.D."/>
        </authorList>
    </citation>
    <scope>NUCLEOTIDE SEQUENCE [LARGE SCALE GENOMIC DNA]</scope>
    <source>
        <strain>KIM10+ / Biovar Mediaevalis</strain>
    </source>
</reference>
<reference key="3">
    <citation type="journal article" date="2004" name="DNA Res.">
        <title>Complete genome sequence of Yersinia pestis strain 91001, an isolate avirulent to humans.</title>
        <authorList>
            <person name="Song Y."/>
            <person name="Tong Z."/>
            <person name="Wang J."/>
            <person name="Wang L."/>
            <person name="Guo Z."/>
            <person name="Han Y."/>
            <person name="Zhang J."/>
            <person name="Pei D."/>
            <person name="Zhou D."/>
            <person name="Qin H."/>
            <person name="Pang X."/>
            <person name="Han Y."/>
            <person name="Zhai J."/>
            <person name="Li M."/>
            <person name="Cui B."/>
            <person name="Qi Z."/>
            <person name="Jin L."/>
            <person name="Dai R."/>
            <person name="Chen F."/>
            <person name="Li S."/>
            <person name="Ye C."/>
            <person name="Du Z."/>
            <person name="Lin W."/>
            <person name="Wang J."/>
            <person name="Yu J."/>
            <person name="Yang H."/>
            <person name="Wang J."/>
            <person name="Huang P."/>
            <person name="Yang R."/>
        </authorList>
    </citation>
    <scope>NUCLEOTIDE SEQUENCE [LARGE SCALE GENOMIC DNA]</scope>
    <source>
        <strain>91001 / Biovar Mediaevalis</strain>
    </source>
</reference>
<feature type="chain" id="PRO_0000126037" description="Small heat shock protein IbpB">
    <location>
        <begin position="1"/>
        <end position="154"/>
    </location>
</feature>
<feature type="domain" description="sHSP" evidence="2">
    <location>
        <begin position="26"/>
        <end position="137"/>
    </location>
</feature>
<gene>
    <name evidence="1" type="primary">ibpB</name>
    <name type="ordered locus">YPO4084</name>
    <name type="ordered locus">y4101</name>
    <name type="ordered locus">YP_3993</name>
</gene>
<accession>Q8Z9V6</accession>
<accession>Q0W9V0</accession>
<accession>Q74PC5</accession>
<accession>Q8CZG5</accession>
<proteinExistence type="inferred from homology"/>
<comment type="function">
    <text evidence="1">Associates with aggregated proteins, together with IbpA, to stabilize and protect them from irreversible denaturation and extensive proteolysis during heat shock and oxidative stress. Aggregated proteins bound to the IbpAB complex are more efficiently refolded and reactivated by the ATP-dependent chaperone systems ClpB and DnaK/DnaJ/GrpE. Its activity is ATP-independent.</text>
</comment>
<comment type="subunit">
    <text evidence="1">Homodimer. Forms homomultimers of about 100-150 subunits at optimal growth temperatures. Conformation changes to oligomers at high temperatures or high ionic concentrations. The decrease in size of the multimers is accompanied by an increase in chaperone activity.</text>
</comment>
<comment type="subcellular location">
    <subcellularLocation>
        <location evidence="1">Cytoplasm</location>
    </subcellularLocation>
</comment>
<comment type="domain">
    <text evidence="1">The N- and C-terminal flexible termini are involved in oligomerization and in the binding of non-native substrate proteins, and are essential for chaperone activity.</text>
</comment>
<comment type="similarity">
    <text evidence="1 2">Belongs to the small heat shock protein (HSP20) family.</text>
</comment>
<comment type="sequence caution" evidence="3">
    <conflict type="erroneous initiation">
        <sequence resource="EMBL-CDS" id="AAM87644"/>
    </conflict>
</comment>
<comment type="sequence caution" evidence="3">
    <conflict type="erroneous initiation">
        <sequence resource="EMBL-CDS" id="AAS64133"/>
    </conflict>
</comment>